<accession>B0B8K2</accession>
<keyword id="KW-0560">Oxidoreductase</keyword>
<keyword id="KW-0819">tRNA processing</keyword>
<proteinExistence type="inferred from homology"/>
<name>TRHO_CHLT2</name>
<reference key="1">
    <citation type="journal article" date="2008" name="Genome Res.">
        <title>Chlamydia trachomatis: genome sequence analysis of lymphogranuloma venereum isolates.</title>
        <authorList>
            <person name="Thomson N.R."/>
            <person name="Holden M.T.G."/>
            <person name="Carder C."/>
            <person name="Lennard N."/>
            <person name="Lockey S.J."/>
            <person name="Marsh P."/>
            <person name="Skipp P."/>
            <person name="O'Connor C.D."/>
            <person name="Goodhead I."/>
            <person name="Norbertzcak H."/>
            <person name="Harris B."/>
            <person name="Ormond D."/>
            <person name="Rance R."/>
            <person name="Quail M.A."/>
            <person name="Parkhill J."/>
            <person name="Stephens R.S."/>
            <person name="Clarke I.N."/>
        </authorList>
    </citation>
    <scope>NUCLEOTIDE SEQUENCE [LARGE SCALE GENOMIC DNA]</scope>
    <source>
        <strain>ATCC VR-902B / DSM 19102 / 434/Bu</strain>
    </source>
</reference>
<evidence type="ECO:0000255" key="1">
    <source>
        <dbReference type="HAMAP-Rule" id="MF_00469"/>
    </source>
</evidence>
<gene>
    <name evidence="1" type="primary">trhO</name>
    <name type="ordered locus">CTL0891</name>
</gene>
<protein>
    <recommendedName>
        <fullName evidence="1">tRNA uridine(34) hydroxylase</fullName>
        <ecNumber evidence="1">1.14.-.-</ecNumber>
    </recommendedName>
    <alternativeName>
        <fullName evidence="1">tRNA hydroxylation protein O</fullName>
    </alternativeName>
</protein>
<feature type="chain" id="PRO_1000200348" description="tRNA uridine(34) hydroxylase">
    <location>
        <begin position="1"/>
        <end position="327"/>
    </location>
</feature>
<feature type="domain" description="Rhodanese" evidence="1">
    <location>
        <begin position="122"/>
        <end position="218"/>
    </location>
</feature>
<feature type="active site" description="Cysteine persulfide intermediate" evidence="1">
    <location>
        <position position="178"/>
    </location>
</feature>
<sequence>MEKNYYALAYYYFGPVSNPYEEIALHKQLFKTMDVSCRIYISEEGINGQFSGYQPDAERYMAWLKQRPDFASIKFKIHHIEENIFPRVTVKYRKELVALGCSVDTTKQGKHISPEEWHEKLQENRCLVLDVRNNYEWKIGHFENAVLPDIETFREFPDYADRLAKEHDPAKTPVMMYCTGGIRCELYSALLLEKGFKEVYQLDGGVIAYGLKMGTGKWRGKLFVFDDRMAMPIDEADPNVSPIARCSLCNTDSDTYYNCANTDCNNLFICCESCIATHKGCCSEECSQAPRIRAFSAERGNKPFRRKHLCPTIEQSCCLKEQENQPA</sequence>
<dbReference type="EC" id="1.14.-.-" evidence="1"/>
<dbReference type="EMBL" id="AM884176">
    <property type="protein sequence ID" value="CAP04328.1"/>
    <property type="molecule type" value="Genomic_DNA"/>
</dbReference>
<dbReference type="RefSeq" id="WP_009873959.1">
    <property type="nucleotide sequence ID" value="NC_010287.1"/>
</dbReference>
<dbReference type="RefSeq" id="YP_001654960.1">
    <property type="nucleotide sequence ID" value="NC_010287.1"/>
</dbReference>
<dbReference type="SMR" id="B0B8K2"/>
<dbReference type="KEGG" id="ctb:CTL0891"/>
<dbReference type="PATRIC" id="fig|471472.4.peg.957"/>
<dbReference type="HOGENOM" id="CLU_038878_1_0_0"/>
<dbReference type="Proteomes" id="UP001154402">
    <property type="component" value="Chromosome"/>
</dbReference>
<dbReference type="GO" id="GO:0016705">
    <property type="term" value="F:oxidoreductase activity, acting on paired donors, with incorporation or reduction of molecular oxygen"/>
    <property type="evidence" value="ECO:0007669"/>
    <property type="project" value="UniProtKB-UniRule"/>
</dbReference>
<dbReference type="GO" id="GO:0006400">
    <property type="term" value="P:tRNA modification"/>
    <property type="evidence" value="ECO:0007669"/>
    <property type="project" value="UniProtKB-UniRule"/>
</dbReference>
<dbReference type="CDD" id="cd01518">
    <property type="entry name" value="RHOD_YceA"/>
    <property type="match status" value="1"/>
</dbReference>
<dbReference type="Gene3D" id="3.30.70.100">
    <property type="match status" value="1"/>
</dbReference>
<dbReference type="Gene3D" id="3.40.250.10">
    <property type="entry name" value="Rhodanese-like domain"/>
    <property type="match status" value="1"/>
</dbReference>
<dbReference type="HAMAP" id="MF_00469">
    <property type="entry name" value="TrhO"/>
    <property type="match status" value="1"/>
</dbReference>
<dbReference type="InterPro" id="IPR001763">
    <property type="entry name" value="Rhodanese-like_dom"/>
</dbReference>
<dbReference type="InterPro" id="IPR036873">
    <property type="entry name" value="Rhodanese-like_dom_sf"/>
</dbReference>
<dbReference type="InterPro" id="IPR022111">
    <property type="entry name" value="Rhodanese_C"/>
</dbReference>
<dbReference type="InterPro" id="IPR020936">
    <property type="entry name" value="TrhO"/>
</dbReference>
<dbReference type="InterPro" id="IPR040503">
    <property type="entry name" value="TRHO_N"/>
</dbReference>
<dbReference type="NCBIfam" id="NF001134">
    <property type="entry name" value="PRK00142.1-2"/>
    <property type="match status" value="1"/>
</dbReference>
<dbReference type="NCBIfam" id="NF001135">
    <property type="entry name" value="PRK00142.1-3"/>
    <property type="match status" value="1"/>
</dbReference>
<dbReference type="PANTHER" id="PTHR43268:SF3">
    <property type="entry name" value="RHODANESE-LIKE DOMAIN-CONTAINING PROTEIN 7-RELATED"/>
    <property type="match status" value="1"/>
</dbReference>
<dbReference type="PANTHER" id="PTHR43268">
    <property type="entry name" value="THIOSULFATE SULFURTRANSFERASE/RHODANESE-LIKE DOMAIN-CONTAINING PROTEIN 2"/>
    <property type="match status" value="1"/>
</dbReference>
<dbReference type="Pfam" id="PF00581">
    <property type="entry name" value="Rhodanese"/>
    <property type="match status" value="1"/>
</dbReference>
<dbReference type="Pfam" id="PF12368">
    <property type="entry name" value="Rhodanese_C"/>
    <property type="match status" value="1"/>
</dbReference>
<dbReference type="Pfam" id="PF17773">
    <property type="entry name" value="UPF0176_N"/>
    <property type="match status" value="1"/>
</dbReference>
<dbReference type="SMART" id="SM00450">
    <property type="entry name" value="RHOD"/>
    <property type="match status" value="1"/>
</dbReference>
<dbReference type="SUPFAM" id="SSF52821">
    <property type="entry name" value="Rhodanese/Cell cycle control phosphatase"/>
    <property type="match status" value="1"/>
</dbReference>
<dbReference type="PROSITE" id="PS50206">
    <property type="entry name" value="RHODANESE_3"/>
    <property type="match status" value="1"/>
</dbReference>
<organism>
    <name type="scientific">Chlamydia trachomatis serovar L2 (strain ATCC VR-902B / DSM 19102 / 434/Bu)</name>
    <dbReference type="NCBI Taxonomy" id="471472"/>
    <lineage>
        <taxon>Bacteria</taxon>
        <taxon>Pseudomonadati</taxon>
        <taxon>Chlamydiota</taxon>
        <taxon>Chlamydiia</taxon>
        <taxon>Chlamydiales</taxon>
        <taxon>Chlamydiaceae</taxon>
        <taxon>Chlamydia/Chlamydophila group</taxon>
        <taxon>Chlamydia</taxon>
    </lineage>
</organism>
<comment type="function">
    <text evidence="1">Catalyzes oxygen-dependent 5-hydroxyuridine (ho5U) modification at position 34 in tRNAs.</text>
</comment>
<comment type="catalytic activity">
    <reaction evidence="1">
        <text>uridine(34) in tRNA + AH2 + O2 = 5-hydroxyuridine(34) in tRNA + A + H2O</text>
        <dbReference type="Rhea" id="RHEA:64224"/>
        <dbReference type="Rhea" id="RHEA-COMP:11727"/>
        <dbReference type="Rhea" id="RHEA-COMP:13381"/>
        <dbReference type="ChEBI" id="CHEBI:13193"/>
        <dbReference type="ChEBI" id="CHEBI:15377"/>
        <dbReference type="ChEBI" id="CHEBI:15379"/>
        <dbReference type="ChEBI" id="CHEBI:17499"/>
        <dbReference type="ChEBI" id="CHEBI:65315"/>
        <dbReference type="ChEBI" id="CHEBI:136877"/>
    </reaction>
</comment>
<comment type="similarity">
    <text evidence="1">Belongs to the TrhO family.</text>
</comment>